<reference evidence="9" key="1">
    <citation type="submission" date="2016-08" db="UniProtKB">
        <authorList>
            <person name="Fearnley I.M."/>
        </authorList>
    </citation>
    <scope>PARTIAL PROTEIN SEQUENCE</scope>
    <source>
        <strain evidence="8">A16 / NCYC 2310</strain>
    </source>
</reference>
<reference evidence="9" key="2">
    <citation type="journal article" date="2015" name="Biochem. J.">
        <title>The purification and characterization of ATP synthase complexes from the mitochondria of four fungal species.</title>
        <authorList>
            <person name="Liu S."/>
            <person name="Charlesworth T.J."/>
            <person name="Bason J.V."/>
            <person name="Montgomery M.G."/>
            <person name="Harbour M.E."/>
            <person name="Fearnley I.M."/>
            <person name="Walker J.E."/>
        </authorList>
    </citation>
    <scope>PROTEIN SEQUENCE OF 1-9</scope>
    <scope>IDENTIFICATION IN ATP SYNTHASE COMPLEX</scope>
    <scope>FUNCTION OF ATPASE COMPLEX</scope>
    <scope>SUBUNIT</scope>
    <scope>SUBCELLULAR LOCATION</scope>
    <scope>MASS SPECTROMETRY</scope>
    <scope>IDENTIFICATION BY MASS SPECTROMETRY</scope>
    <source>
        <strain evidence="7">A16 / NCYC 2310</strain>
    </source>
</reference>
<reference evidence="9" key="3">
    <citation type="journal article" date="2016" name="Proc. Natl. Acad. Sci. U.S.A.">
        <title>Structure of the mitochondrial ATP synthase from Pichia angusta determined by electron cryo-microscopy.</title>
        <authorList>
            <person name="Vinothkumar K.R."/>
            <person name="Montgomery M.G."/>
            <person name="Liu S."/>
            <person name="Walker J.E."/>
        </authorList>
    </citation>
    <scope>STRUCTURE BY ELECTRON MICROSCOPY (7.0 ANGSTROMS) OF MONOMERIC ATP SYNTHASE COMPLEX IN COMPLEX WITH BOVINE ATPIF1</scope>
    <scope>FUNCTION</scope>
    <scope>SUBUNIT</scope>
    <scope>SUBCELLULAR LOCATION</scope>
</reference>
<comment type="function">
    <text evidence="1 4 5">Mitochondrial membrane ATP synthase (F(1)F(0) ATP synthase or Complex V) produces ATP from ADP in the presence of a proton gradient across the membrane which is generated by electron transport complexes of the respiratory chain (PubMed:25759169). F-type ATP synthases consist of two structural domains, F(1) - containing the extramembraneous catalytic core, and F(0) - containing the membrane proton channel, linked together by a central stalk and a peripheral stalk (PubMed:27791192). During catalysis, ATP synthesis in the catalytic domain of F(1) is coupled via a rotary mechanism of the central stalk subunits to proton translocation (By similarity). Part of the complex F(0) domain (By similarity). Minor subunit located with subunit a/ATP6 in the membrane (By similarity). The K chain binds the dimeric form by interacting with the G and E chains (By similarity).</text>
</comment>
<comment type="subunit">
    <text evidence="1 4 5">F-type ATP synthases have 2 components, the catalytic core F(1) and the membrane-embedded component F(0), linked together by a central stalk and a peripheral stalk (PubMed:27791192). The central stalk, also called rotor shaft, is often seen as part of F(1) (PubMed:27791192). The peripheral stalk is seen as part of F(0). F(0) contains the membrane channel next to the rotor (PubMed:27791192). F-type ATP synthases form dimers but each monomer functions independently in ATP generation (By similarity). The dimer consists of 18 different polypeptides: ATP1 (subunit alpha, part of F(1), 3 molecules per monomer), ATP2 (subunit beta, part of F(1), 3 molecules per monomer), ATP3 (subunit gamma, part of the central stalk), ATP4 (subunit b, part of the peripheral stalk), ATP5/OSCP (subunit 5/OSCP, part of the peripheral stalk), ATP6 (subunit a, part of the peripheral stalk), ATP7 (subunit d, part of the peripheral stalk), ATP8 (subunit 8, part of the peripheral stalk), OLI1 (subunit c, part of the rotor, 10 molecules per monomer), ATP14 (subunit h, part of the peripheral stalk), ATP15 (subunit epsilon, part of the central stalk), ATP16 (subunit delta, part of the central stalk), ATP17 (subunit f, part of the peripheral stalk), ATP18 (subunit i/j, part of the peripheral stalk) (PubMed:25759169, PubMed:27791192). Dimer-specific subunits are ATP19 (subunit k, at interface between monomers), ATP20 (subunit g, at interface between monomers), TIM11 (subunit e, at interface between monomers) (By similarity). Also contains subunit L (PubMed:25759169).</text>
</comment>
<comment type="subcellular location">
    <subcellularLocation>
        <location evidence="10">Mitochondrion inner membrane</location>
        <topology evidence="3">Single-pass membrane protein</topology>
    </subcellularLocation>
    <text evidence="10">The F-type ATP synthase complex is anchored in the mitochondrial inner membrane via the F(0) domain with the F(1) domain and the peripheral stalk extending into the mitochondrial matrix.</text>
</comment>
<comment type="mass spectrometry"/>
<comment type="similarity">
    <text evidence="9">Belongs to the ATP19 family.</text>
</comment>
<sequence>AGAYTLFGKAIPPHHLAIATIGTVVALVAPKPWSPKVKLEPKIDASSPEEEKFIKEYLEKHL</sequence>
<gene>
    <name evidence="2" type="primary">ATP19</name>
</gene>
<evidence type="ECO:0000250" key="1">
    <source>
        <dbReference type="UniProtKB" id="B5FVB3"/>
    </source>
</evidence>
<evidence type="ECO:0000250" key="2">
    <source>
        <dbReference type="UniProtKB" id="P81451"/>
    </source>
</evidence>
<evidence type="ECO:0000255" key="3"/>
<evidence type="ECO:0000269" key="4">
    <source>
    </source>
</evidence>
<evidence type="ECO:0000269" key="5">
    <source>
    </source>
</evidence>
<evidence type="ECO:0000269" key="6">
    <source ref="1"/>
</evidence>
<evidence type="ECO:0000303" key="7">
    <source>
    </source>
</evidence>
<evidence type="ECO:0000303" key="8">
    <source ref="1"/>
</evidence>
<evidence type="ECO:0000305" key="9"/>
<evidence type="ECO:0000305" key="10">
    <source>
    </source>
</evidence>
<name>ATP19_PICAN</name>
<organism evidence="7">
    <name type="scientific">Pichia angusta</name>
    <name type="common">Yeast</name>
    <name type="synonym">Hansenula polymorpha</name>
    <dbReference type="NCBI Taxonomy" id="870730"/>
    <lineage>
        <taxon>Eukaryota</taxon>
        <taxon>Fungi</taxon>
        <taxon>Dikarya</taxon>
        <taxon>Ascomycota</taxon>
        <taxon>Saccharomycotina</taxon>
        <taxon>Pichiomycetes</taxon>
        <taxon>Pichiales</taxon>
        <taxon>Pichiaceae</taxon>
        <taxon>Ogataea</taxon>
    </lineage>
</organism>
<protein>
    <recommendedName>
        <fullName evidence="2">ATP synthase subunit K, mitochondrial</fullName>
    </recommendedName>
</protein>
<proteinExistence type="evidence at protein level"/>
<feature type="chain" id="PRO_0000445305" description="ATP synthase subunit K, mitochondrial" evidence="6">
    <location>
        <begin position="1"/>
        <end position="62"/>
    </location>
</feature>
<feature type="transmembrane region" description="Helical" evidence="3">
    <location>
        <begin position="14"/>
        <end position="30"/>
    </location>
</feature>
<keyword id="KW-0066">ATP synthesis</keyword>
<keyword id="KW-0138">CF(0)</keyword>
<keyword id="KW-0903">Direct protein sequencing</keyword>
<keyword id="KW-0375">Hydrogen ion transport</keyword>
<keyword id="KW-0406">Ion transport</keyword>
<keyword id="KW-0472">Membrane</keyword>
<keyword id="KW-0496">Mitochondrion</keyword>
<keyword id="KW-0999">Mitochondrion inner membrane</keyword>
<keyword id="KW-0812">Transmembrane</keyword>
<keyword id="KW-1133">Transmembrane helix</keyword>
<keyword id="KW-0813">Transport</keyword>
<accession>C0HK66</accession>
<dbReference type="SMR" id="C0HK66"/>
<dbReference type="GO" id="GO:0005743">
    <property type="term" value="C:mitochondrial inner membrane"/>
    <property type="evidence" value="ECO:0007669"/>
    <property type="project" value="UniProtKB-SubCell"/>
</dbReference>
<dbReference type="GO" id="GO:0045259">
    <property type="term" value="C:proton-transporting ATP synthase complex"/>
    <property type="evidence" value="ECO:0007669"/>
    <property type="project" value="UniProtKB-KW"/>
</dbReference>
<dbReference type="GO" id="GO:0015986">
    <property type="term" value="P:proton motive force-driven ATP synthesis"/>
    <property type="evidence" value="ECO:0007669"/>
    <property type="project" value="TreeGrafter"/>
</dbReference>
<dbReference type="GO" id="GO:1902600">
    <property type="term" value="P:proton transmembrane transport"/>
    <property type="evidence" value="ECO:0007669"/>
    <property type="project" value="UniProtKB-KW"/>
</dbReference>
<dbReference type="InterPro" id="IPR021278">
    <property type="entry name" value="ATP19"/>
</dbReference>
<dbReference type="PANTHER" id="PTHR28074">
    <property type="entry name" value="ATP SYNTHASE SUBUNIT K, MITOCHONDRIAL"/>
    <property type="match status" value="1"/>
</dbReference>
<dbReference type="PANTHER" id="PTHR28074:SF1">
    <property type="entry name" value="ATP SYNTHASE SUBUNIT K, MITOCHONDRIAL"/>
    <property type="match status" value="1"/>
</dbReference>
<dbReference type="Pfam" id="PF11022">
    <property type="entry name" value="ATP19"/>
    <property type="match status" value="1"/>
</dbReference>